<reference key="1">
    <citation type="journal article" date="2011" name="PLoS Genet.">
        <title>Whole-genome comparison reveals novel genetic elements that characterize the genome of industrial strains of Saccharomyces cerevisiae.</title>
        <authorList>
            <person name="Borneman A.R."/>
            <person name="Desany B.A."/>
            <person name="Riches D."/>
            <person name="Affourtit J.P."/>
            <person name="Forgan A.H."/>
            <person name="Pretorius I.S."/>
            <person name="Egholm M."/>
            <person name="Chambers P.J."/>
        </authorList>
    </citation>
    <scope>NUCLEOTIDE SEQUENCE [LARGE SCALE GENOMIC DNA]</scope>
    <source>
        <strain>FostersB</strain>
    </source>
</reference>
<dbReference type="EMBL" id="AEHH01000016">
    <property type="protein sequence ID" value="EGA58996.1"/>
    <property type="molecule type" value="Genomic_DNA"/>
</dbReference>
<dbReference type="HOGENOM" id="CLU_137494_1_0_1"/>
<dbReference type="OrthoDB" id="10059120at2759"/>
<dbReference type="GO" id="GO:0042995">
    <property type="term" value="C:cell projection"/>
    <property type="evidence" value="ECO:0007669"/>
    <property type="project" value="UniProtKB-SubCell"/>
</dbReference>
<dbReference type="GO" id="GO:0005737">
    <property type="term" value="C:cytoplasm"/>
    <property type="evidence" value="ECO:0007669"/>
    <property type="project" value="UniProtKB-SubCell"/>
</dbReference>
<dbReference type="CDD" id="cd21457">
    <property type="entry name" value="DLC-like_TDA2"/>
    <property type="match status" value="1"/>
</dbReference>
<dbReference type="Gene3D" id="3.30.1140.40">
    <property type="entry name" value="Tctex-1"/>
    <property type="match status" value="1"/>
</dbReference>
<dbReference type="InterPro" id="IPR038586">
    <property type="entry name" value="Tctex-1-like_sf"/>
</dbReference>
<name>TDA2_YEASB</name>
<feature type="chain" id="PRO_0000410739" description="Topoisomerase I damage affected protein 2">
    <location>
        <begin position="1"/>
        <end position="124"/>
    </location>
</feature>
<organism>
    <name type="scientific">Saccharomyces cerevisiae (strain FostersB)</name>
    <name type="common">Baker's yeast</name>
    <dbReference type="NCBI Taxonomy" id="764102"/>
    <lineage>
        <taxon>Eukaryota</taxon>
        <taxon>Fungi</taxon>
        <taxon>Dikarya</taxon>
        <taxon>Ascomycota</taxon>
        <taxon>Saccharomycotina</taxon>
        <taxon>Saccharomycetes</taxon>
        <taxon>Saccharomycetales</taxon>
        <taxon>Saccharomycetaceae</taxon>
        <taxon>Saccharomyces</taxon>
    </lineage>
</organism>
<gene>
    <name type="primary">TDA2</name>
    <name type="ORF">FOSTERSB_1329</name>
</gene>
<proteinExistence type="inferred from homology"/>
<comment type="subcellular location">
    <subcellularLocation>
        <location evidence="1">Cytoplasm</location>
    </subcellularLocation>
    <subcellularLocation>
        <location evidence="1">Cell projection</location>
    </subcellularLocation>
    <text evidence="1">Concentrates at cytoplasmic punctate structures and localizes at the mating projection tip.</text>
</comment>
<comment type="similarity">
    <text evidence="2">Belongs to the TDA2 family.</text>
</comment>
<evidence type="ECO:0000250" key="1">
    <source>
        <dbReference type="UniProtKB" id="P40045"/>
    </source>
</evidence>
<evidence type="ECO:0000305" key="2"/>
<keyword id="KW-0966">Cell projection</keyword>
<keyword id="KW-0963">Cytoplasm</keyword>
<sequence length="124" mass="14253">MQIEIKDGRSDNSPLPERKLVTLIQESYDSLKBDNEINLSTESTSNLLIKLVLEKLEKHSSLYKYIASVTTLNIEGLNEENANFSLKNDIGASWESKKDGIFNYKLEDKNSNECYLITILWLHK</sequence>
<accession>E7Q2X8</accession>
<protein>
    <recommendedName>
        <fullName>Topoisomerase I damage affected protein 2</fullName>
    </recommendedName>
</protein>